<proteinExistence type="evidence at protein level"/>
<evidence type="ECO:0000250" key="1">
    <source>
        <dbReference type="UniProtKB" id="P00347"/>
    </source>
</evidence>
<evidence type="ECO:0000250" key="2">
    <source>
        <dbReference type="UniProtKB" id="P04035"/>
    </source>
</evidence>
<evidence type="ECO:0000255" key="3"/>
<evidence type="ECO:0000255" key="4">
    <source>
        <dbReference type="PROSITE-ProRule" id="PRU00199"/>
    </source>
</evidence>
<evidence type="ECO:0000255" key="5">
    <source>
        <dbReference type="PROSITE-ProRule" id="PRU10003"/>
    </source>
</evidence>
<evidence type="ECO:0000269" key="6">
    <source>
    </source>
</evidence>
<evidence type="ECO:0000269" key="7">
    <source>
    </source>
</evidence>
<evidence type="ECO:0000305" key="8"/>
<evidence type="ECO:0000305" key="9">
    <source>
    </source>
</evidence>
<reference key="1">
    <citation type="submission" date="1994-08" db="EMBL/GenBank/DDBJ databases">
        <title>Cloning and sequencing of rat 3-hydroxy-3-methylglutaryl coenzyme A reductase.</title>
        <authorList>
            <person name="Hangjiong C."/>
            <person name="Williams D."/>
            <person name="Shapiro D."/>
        </authorList>
    </citation>
    <scope>NUCLEOTIDE SEQUENCE [GENOMIC DNA]</scope>
</reference>
<reference key="2">
    <citation type="journal article" date="2004" name="Genome Res.">
        <title>The status, quality, and expansion of the NIH full-length cDNA project: the Mammalian Gene Collection (MGC).</title>
        <authorList>
            <consortium name="The MGC Project Team"/>
        </authorList>
    </citation>
    <scope>NUCLEOTIDE SEQUENCE [LARGE SCALE MRNA]</scope>
    <source>
        <tissue>Prostate</tissue>
    </source>
</reference>
<reference key="3">
    <citation type="submission" date="1990-10" db="EMBL/GenBank/DDBJ databases">
        <title>Rat HMG-CoA reductase cDNA sequence contains an unusual 36 bp insert bounded by inverted repeats.</title>
        <authorList>
            <person name="Khan S."/>
            <person name="Kabat S."/>
            <person name="Stambrook P."/>
        </authorList>
    </citation>
    <scope>NUCLEOTIDE SEQUENCE [MRNA] OF 644-887</scope>
    <source>
        <strain>Sprague-Dawley</strain>
        <tissue>Liver</tissue>
    </source>
</reference>
<reference key="4">
    <citation type="journal article" date="1990" name="EMBO J.">
        <title>Regulation of HMG-CoA reductase: identification of the site phosphorylated by the AMP-activated protein kinase in vitro and in intact rat liver.</title>
        <authorList>
            <person name="Clarke P.R."/>
            <person name="Hardie D.G."/>
        </authorList>
    </citation>
    <scope>PROTEIN SEQUENCE OF 423-443 AND 867-878</scope>
    <scope>PHOSPHORYLATION AT SER-871</scope>
    <source>
        <tissue>Liver</tissue>
    </source>
</reference>
<reference key="5">
    <citation type="journal article" date="1985" name="J. Biol. Chem.">
        <title>Functional size of rat hepatic 3-hydroxy-3-methylglutaryl coenzyme A reductase as determined by radiation inactivation.</title>
        <authorList>
            <person name="Edwards P.A."/>
            <person name="Kempner E.S."/>
            <person name="Lan S.-F."/>
            <person name="Erickson S.K."/>
        </authorList>
    </citation>
    <scope>CATALYTIC ACTIVITY</scope>
    <scope>FUNCTION</scope>
    <scope>SUBUNIT</scope>
    <source>
        <tissue>Liver</tissue>
    </source>
</reference>
<reference key="6">
    <citation type="journal article" date="1992" name="FEBS Lett.">
        <title>Phosphorylation and inactivation of HMG-CoA reductase at the AMP-activated protein kinase site in response to fructose treatment of isolated rat hepatocytes.</title>
        <authorList>
            <person name="Gillespie J.G."/>
            <person name="Hardie D.G."/>
        </authorList>
    </citation>
    <scope>PHOSPHORYLATION AT SER-871</scope>
    <source>
        <tissue>Liver</tissue>
    </source>
</reference>
<dbReference type="EC" id="1.1.1.34" evidence="7"/>
<dbReference type="EMBL" id="M29249">
    <property type="protein sequence ID" value="AAA40608.1"/>
    <property type="molecule type" value="Genomic_DNA"/>
</dbReference>
<dbReference type="EMBL" id="BC064654">
    <property type="protein sequence ID" value="AAH64654.1"/>
    <property type="molecule type" value="mRNA"/>
</dbReference>
<dbReference type="EMBL" id="X55286">
    <property type="protein sequence ID" value="CAA39001.1"/>
    <property type="molecule type" value="mRNA"/>
</dbReference>
<dbReference type="PIR" id="S33175">
    <property type="entry name" value="S33175"/>
</dbReference>
<dbReference type="RefSeq" id="NP_037266.2">
    <property type="nucleotide sequence ID" value="NM_013134.2"/>
</dbReference>
<dbReference type="SMR" id="P51639"/>
<dbReference type="BioGRID" id="247704">
    <property type="interactions" value="1"/>
</dbReference>
<dbReference type="FunCoup" id="P51639">
    <property type="interactions" value="1475"/>
</dbReference>
<dbReference type="MINT" id="P51639"/>
<dbReference type="STRING" id="10116.ENSRNOP00000022055"/>
<dbReference type="BindingDB" id="P51639"/>
<dbReference type="ChEMBL" id="CHEMBL3247"/>
<dbReference type="DrugCentral" id="P51639"/>
<dbReference type="GuidetoPHARMACOLOGY" id="639"/>
<dbReference type="GlyCosmos" id="P51639">
    <property type="glycosylation" value="1 site, No reported glycans"/>
</dbReference>
<dbReference type="GlyGen" id="P51639">
    <property type="glycosylation" value="1 site"/>
</dbReference>
<dbReference type="iPTMnet" id="P51639"/>
<dbReference type="PhosphoSitePlus" id="P51639"/>
<dbReference type="PaxDb" id="10116-ENSRNOP00000022055"/>
<dbReference type="GeneID" id="25675"/>
<dbReference type="KEGG" id="rno:25675"/>
<dbReference type="AGR" id="RGD:2803"/>
<dbReference type="CTD" id="3156"/>
<dbReference type="RGD" id="2803">
    <property type="gene designation" value="Hmgcr"/>
</dbReference>
<dbReference type="VEuPathDB" id="HostDB:ENSRNOG00000016122"/>
<dbReference type="eggNOG" id="KOG2480">
    <property type="taxonomic scope" value="Eukaryota"/>
</dbReference>
<dbReference type="HOGENOM" id="CLU_001734_0_1_1"/>
<dbReference type="InParanoid" id="P51639"/>
<dbReference type="PhylomeDB" id="P51639"/>
<dbReference type="TreeFam" id="TF105362"/>
<dbReference type="BRENDA" id="1.1.1.34">
    <property type="organism ID" value="5301"/>
</dbReference>
<dbReference type="Reactome" id="R-RNO-191273">
    <property type="pathway name" value="Cholesterol biosynthesis"/>
</dbReference>
<dbReference type="UniPathway" id="UPA00058">
    <property type="reaction ID" value="UER00103"/>
</dbReference>
<dbReference type="PRO" id="PR:P51639"/>
<dbReference type="Proteomes" id="UP000002494">
    <property type="component" value="Chromosome 2"/>
</dbReference>
<dbReference type="Bgee" id="ENSRNOG00000016122">
    <property type="expression patterns" value="Expressed in duodenum and 20 other cell types or tissues"/>
</dbReference>
<dbReference type="GO" id="GO:0005783">
    <property type="term" value="C:endoplasmic reticulum"/>
    <property type="evidence" value="ECO:0000250"/>
    <property type="project" value="UniProtKB"/>
</dbReference>
<dbReference type="GO" id="GO:0005789">
    <property type="term" value="C:endoplasmic reticulum membrane"/>
    <property type="evidence" value="ECO:0000318"/>
    <property type="project" value="GO_Central"/>
</dbReference>
<dbReference type="GO" id="GO:0005778">
    <property type="term" value="C:peroxisomal membrane"/>
    <property type="evidence" value="ECO:0000250"/>
    <property type="project" value="UniProtKB"/>
</dbReference>
<dbReference type="GO" id="GO:0120225">
    <property type="term" value="F:coenzyme A binding"/>
    <property type="evidence" value="ECO:0000266"/>
    <property type="project" value="RGD"/>
</dbReference>
<dbReference type="GO" id="GO:0030695">
    <property type="term" value="F:GTPase regulator activity"/>
    <property type="evidence" value="ECO:0000266"/>
    <property type="project" value="RGD"/>
</dbReference>
<dbReference type="GO" id="GO:0004420">
    <property type="term" value="F:hydroxymethylglutaryl-CoA reductase (NADPH) activity"/>
    <property type="evidence" value="ECO:0000266"/>
    <property type="project" value="RGD"/>
</dbReference>
<dbReference type="GO" id="GO:0042802">
    <property type="term" value="F:identical protein binding"/>
    <property type="evidence" value="ECO:0000353"/>
    <property type="project" value="RGD"/>
</dbReference>
<dbReference type="GO" id="GO:0070402">
    <property type="term" value="F:NADPH binding"/>
    <property type="evidence" value="ECO:0000266"/>
    <property type="project" value="RGD"/>
</dbReference>
<dbReference type="GO" id="GO:0051721">
    <property type="term" value="F:protein phosphatase 2A binding"/>
    <property type="evidence" value="ECO:0000353"/>
    <property type="project" value="RGD"/>
</dbReference>
<dbReference type="GO" id="GO:0006695">
    <property type="term" value="P:cholesterol biosynthetic process"/>
    <property type="evidence" value="ECO:0000266"/>
    <property type="project" value="RGD"/>
</dbReference>
<dbReference type="GO" id="GO:0042632">
    <property type="term" value="P:cholesterol homeostasis"/>
    <property type="evidence" value="ECO:0000270"/>
    <property type="project" value="RGD"/>
</dbReference>
<dbReference type="GO" id="GO:0015936">
    <property type="term" value="P:coenzyme A metabolic process"/>
    <property type="evidence" value="ECO:0007669"/>
    <property type="project" value="InterPro"/>
</dbReference>
<dbReference type="GO" id="GO:0008299">
    <property type="term" value="P:isoprenoid biosynthetic process"/>
    <property type="evidence" value="ECO:0000318"/>
    <property type="project" value="GO_Central"/>
</dbReference>
<dbReference type="GO" id="GO:0060291">
    <property type="term" value="P:long-term synaptic potentiation"/>
    <property type="evidence" value="ECO:0000266"/>
    <property type="project" value="RGD"/>
</dbReference>
<dbReference type="GO" id="GO:0045445">
    <property type="term" value="P:myoblast differentiation"/>
    <property type="evidence" value="ECO:0000270"/>
    <property type="project" value="RGD"/>
</dbReference>
<dbReference type="GO" id="GO:1900222">
    <property type="term" value="P:negative regulation of amyloid-beta clearance"/>
    <property type="evidence" value="ECO:0000266"/>
    <property type="project" value="RGD"/>
</dbReference>
<dbReference type="GO" id="GO:0043066">
    <property type="term" value="P:negative regulation of apoptotic process"/>
    <property type="evidence" value="ECO:0000315"/>
    <property type="project" value="RGD"/>
</dbReference>
<dbReference type="GO" id="GO:0061179">
    <property type="term" value="P:negative regulation of insulin secretion involved in cellular response to glucose stimulus"/>
    <property type="evidence" value="ECO:0000315"/>
    <property type="project" value="RGD"/>
</dbReference>
<dbReference type="GO" id="GO:0042177">
    <property type="term" value="P:negative regulation of protein catabolic process"/>
    <property type="evidence" value="ECO:0000266"/>
    <property type="project" value="RGD"/>
</dbReference>
<dbReference type="GO" id="GO:0050709">
    <property type="term" value="P:negative regulation of protein secretion"/>
    <property type="evidence" value="ECO:0000266"/>
    <property type="project" value="RGD"/>
</dbReference>
<dbReference type="GO" id="GO:0010664">
    <property type="term" value="P:negative regulation of striated muscle cell apoptotic process"/>
    <property type="evidence" value="ECO:0000315"/>
    <property type="project" value="RGD"/>
</dbReference>
<dbReference type="GO" id="GO:0010666">
    <property type="term" value="P:positive regulation of cardiac muscle cell apoptotic process"/>
    <property type="evidence" value="ECO:0000315"/>
    <property type="project" value="RGD"/>
</dbReference>
<dbReference type="GO" id="GO:0008284">
    <property type="term" value="P:positive regulation of cell population proliferation"/>
    <property type="evidence" value="ECO:0000315"/>
    <property type="project" value="RGD"/>
</dbReference>
<dbReference type="GO" id="GO:0070374">
    <property type="term" value="P:positive regulation of ERK1 and ERK2 cascade"/>
    <property type="evidence" value="ECO:0000315"/>
    <property type="project" value="RGD"/>
</dbReference>
<dbReference type="GO" id="GO:0048643">
    <property type="term" value="P:positive regulation of skeletal muscle tissue development"/>
    <property type="evidence" value="ECO:0000315"/>
    <property type="project" value="RGD"/>
</dbReference>
<dbReference type="GO" id="GO:0048661">
    <property type="term" value="P:positive regulation of smooth muscle cell proliferation"/>
    <property type="evidence" value="ECO:0000315"/>
    <property type="project" value="RGD"/>
</dbReference>
<dbReference type="GO" id="GO:0032874">
    <property type="term" value="P:positive regulation of stress-activated MAPK cascade"/>
    <property type="evidence" value="ECO:0000315"/>
    <property type="project" value="RGD"/>
</dbReference>
<dbReference type="GO" id="GO:0045907">
    <property type="term" value="P:positive regulation of vasoconstriction"/>
    <property type="evidence" value="ECO:0000315"/>
    <property type="project" value="RGD"/>
</dbReference>
<dbReference type="GO" id="GO:0070372">
    <property type="term" value="P:regulation of ERK1 and ERK2 cascade"/>
    <property type="evidence" value="ECO:0000266"/>
    <property type="project" value="RGD"/>
</dbReference>
<dbReference type="GO" id="GO:0070723">
    <property type="term" value="P:response to cholesterol"/>
    <property type="evidence" value="ECO:0000270"/>
    <property type="project" value="RGD"/>
</dbReference>
<dbReference type="GO" id="GO:0045471">
    <property type="term" value="P:response to ethanol"/>
    <property type="evidence" value="ECO:0000270"/>
    <property type="project" value="RGD"/>
</dbReference>
<dbReference type="GO" id="GO:0007584">
    <property type="term" value="P:response to nutrient"/>
    <property type="evidence" value="ECO:0000270"/>
    <property type="project" value="RGD"/>
</dbReference>
<dbReference type="GO" id="GO:0031667">
    <property type="term" value="P:response to nutrient levels"/>
    <property type="evidence" value="ECO:0000270"/>
    <property type="project" value="RGD"/>
</dbReference>
<dbReference type="GO" id="GO:0016126">
    <property type="term" value="P:sterol biosynthetic process"/>
    <property type="evidence" value="ECO:0000318"/>
    <property type="project" value="GO_Central"/>
</dbReference>
<dbReference type="GO" id="GO:0070328">
    <property type="term" value="P:triglyceride homeostasis"/>
    <property type="evidence" value="ECO:0000270"/>
    <property type="project" value="RGD"/>
</dbReference>
<dbReference type="GO" id="GO:0006743">
    <property type="term" value="P:ubiquinone metabolic process"/>
    <property type="evidence" value="ECO:0000315"/>
    <property type="project" value="RGD"/>
</dbReference>
<dbReference type="GO" id="GO:0008542">
    <property type="term" value="P:visual learning"/>
    <property type="evidence" value="ECO:0000266"/>
    <property type="project" value="RGD"/>
</dbReference>
<dbReference type="CDD" id="cd00643">
    <property type="entry name" value="HMG-CoA_reductase_classI"/>
    <property type="match status" value="1"/>
</dbReference>
<dbReference type="FunFam" id="1.10.3270.10:FF:000001">
    <property type="entry name" value="3-hydroxy-3-methylglutaryl coenzyme A reductase"/>
    <property type="match status" value="1"/>
</dbReference>
<dbReference type="FunFam" id="3.30.70.420:FF:000001">
    <property type="entry name" value="3-hydroxy-3-methylglutaryl coenzyme A reductase"/>
    <property type="match status" value="1"/>
</dbReference>
<dbReference type="FunFam" id="3.90.770.10:FF:000002">
    <property type="entry name" value="3-hydroxy-3-methylglutaryl coenzyme A reductase"/>
    <property type="match status" value="1"/>
</dbReference>
<dbReference type="Gene3D" id="3.90.770.10">
    <property type="entry name" value="3-hydroxy-3-methylglutaryl-coenzyme A Reductase, Chain A, domain 2"/>
    <property type="match status" value="1"/>
</dbReference>
<dbReference type="Gene3D" id="1.10.3270.10">
    <property type="entry name" value="HMGR, N-terminal domain"/>
    <property type="match status" value="1"/>
</dbReference>
<dbReference type="Gene3D" id="3.30.70.420">
    <property type="entry name" value="Hydroxymethylglutaryl-CoA reductase, class I/II, NAD/NADP-binding domain"/>
    <property type="match status" value="1"/>
</dbReference>
<dbReference type="InterPro" id="IPR002202">
    <property type="entry name" value="HMG_CoA_Rdtase"/>
</dbReference>
<dbReference type="InterPro" id="IPR023074">
    <property type="entry name" value="HMG_CoA_Rdtase_cat_sf"/>
</dbReference>
<dbReference type="InterPro" id="IPR023076">
    <property type="entry name" value="HMG_CoA_Rdtase_CS"/>
</dbReference>
<dbReference type="InterPro" id="IPR004554">
    <property type="entry name" value="HMG_CoA_Rdtase_eu_arc"/>
</dbReference>
<dbReference type="InterPro" id="IPR004816">
    <property type="entry name" value="HMG_CoA_Rdtase_metazoan"/>
</dbReference>
<dbReference type="InterPro" id="IPR023282">
    <property type="entry name" value="HMG_CoA_Rdtase_N"/>
</dbReference>
<dbReference type="InterPro" id="IPR009023">
    <property type="entry name" value="HMG_CoA_Rdtase_NAD(P)-bd_sf"/>
</dbReference>
<dbReference type="InterPro" id="IPR009029">
    <property type="entry name" value="HMG_CoA_Rdtase_sub-bd_dom_sf"/>
</dbReference>
<dbReference type="InterPro" id="IPR053958">
    <property type="entry name" value="HMGCR/SNAP/NPC1-like_SSD"/>
</dbReference>
<dbReference type="InterPro" id="IPR000731">
    <property type="entry name" value="SSD"/>
</dbReference>
<dbReference type="NCBIfam" id="TIGR00920">
    <property type="entry name" value="2A060605"/>
    <property type="match status" value="1"/>
</dbReference>
<dbReference type="NCBIfam" id="TIGR00533">
    <property type="entry name" value="HMG_CoA_R_NADP"/>
    <property type="match status" value="1"/>
</dbReference>
<dbReference type="PANTHER" id="PTHR10572">
    <property type="entry name" value="3-HYDROXY-3-METHYLGLUTARYL-COENZYME A REDUCTASE"/>
    <property type="match status" value="1"/>
</dbReference>
<dbReference type="PANTHER" id="PTHR10572:SF24">
    <property type="entry name" value="3-HYDROXY-3-METHYLGLUTARYL-COENZYME A REDUCTASE"/>
    <property type="match status" value="1"/>
</dbReference>
<dbReference type="Pfam" id="PF00368">
    <property type="entry name" value="HMG-CoA_red"/>
    <property type="match status" value="1"/>
</dbReference>
<dbReference type="Pfam" id="PF12349">
    <property type="entry name" value="Sterol-sensing"/>
    <property type="match status" value="1"/>
</dbReference>
<dbReference type="PRINTS" id="PR00071">
    <property type="entry name" value="HMGCOARDTASE"/>
</dbReference>
<dbReference type="SUPFAM" id="SSF82866">
    <property type="entry name" value="Multidrug efflux transporter AcrB transmembrane domain"/>
    <property type="match status" value="1"/>
</dbReference>
<dbReference type="SUPFAM" id="SSF55035">
    <property type="entry name" value="NAD-binding domain of HMG-CoA reductase"/>
    <property type="match status" value="1"/>
</dbReference>
<dbReference type="SUPFAM" id="SSF56542">
    <property type="entry name" value="Substrate-binding domain of HMG-CoA reductase"/>
    <property type="match status" value="1"/>
</dbReference>
<dbReference type="PROSITE" id="PS00066">
    <property type="entry name" value="HMG_COA_REDUCTASE_1"/>
    <property type="match status" value="1"/>
</dbReference>
<dbReference type="PROSITE" id="PS00318">
    <property type="entry name" value="HMG_COA_REDUCTASE_2"/>
    <property type="match status" value="1"/>
</dbReference>
<dbReference type="PROSITE" id="PS01192">
    <property type="entry name" value="HMG_COA_REDUCTASE_3"/>
    <property type="match status" value="1"/>
</dbReference>
<dbReference type="PROSITE" id="PS50065">
    <property type="entry name" value="HMG_COA_REDUCTASE_4"/>
    <property type="match status" value="1"/>
</dbReference>
<dbReference type="PROSITE" id="PS50156">
    <property type="entry name" value="SSD"/>
    <property type="match status" value="1"/>
</dbReference>
<sequence length="887" mass="96688">MLSRLFRMHGLFVASHPWEVIVGTVTLTICMMSMNMFTGNNKICGWNYECPKFEEDVLSSDIIILTITRCIAILYIYFQFQNLRQLGSKYILGIAGLFTIFSSFVFSTVVIHFLDKELTGLNEALPFFLLLIDLSRASALAKFALSSNSQDEVRENIARGMAILGPTFTLDALVECLVIGVGTMSGVRQLEIMCCFGCMSVLANYFVFMTFFPACVSLVLELSRESREGRPIWQLSHFARVLEEEENKPNPVTQRVKMIMSLGLVLVHAHSRWIADPSPQNSTAEQSKVSLGLAEDVSKRIEPSVSLWQFYLSKMISMDIEQVITLSLALLLAVKYIFFEQAETESTLSLKNPITSPVVTPKKAQDNCCRREPLLVRRNQKLSSVEEDPGVNQDRKVEVIKPLVAEAETSGRATFVLGASAASPPLALGAQEPGIELPSEPRPNEECLQILESAEKGAKFLSDAEIIQLVNAKHIPAYKLETLMETHERGVSIRRQLLSAKLAEPSSLQYLPYRDYNYSLVMGACCENVIGYMPIPVGVAGPLCLDGKEYQVPMATTEGCLVASTNRGCRAISLGGGASSRVLADGMSRGPVVRLPRACDSAEVKSWLETPEGFAVVKEAFDSTSRFARLQKLHVTLAGRNLYIRLQSKTGDAMGMNMISKGTEKALLKLQEFFPELQILAVSGNYCTDKKPAAINWIEGRGKTVVCEAVIPAKVVREVLKTTTEAMVDVNINKNLVGSAMAGSIGGYNAHAANIVTAIYIACGQDAAQNVGSSNCITLMEASGPTNEDLYISCTMPSIEIGTVGGGTNLLPQQACLQMLGVQGACKDNPGENARQLARIVCGTVMAGELSLMAALAAGHLVRSHMVHNRSKINLQDLQGTCTKKAA</sequence>
<feature type="chain" id="PRO_0000114424" description="3-hydroxy-3-methylglutaryl-coenzyme A reductase">
    <location>
        <begin position="1"/>
        <end position="887"/>
    </location>
</feature>
<feature type="topological domain" description="Cytoplasmic" evidence="1">
    <location>
        <begin position="1"/>
        <end position="9"/>
    </location>
</feature>
<feature type="transmembrane region" description="Helical" evidence="1">
    <location>
        <begin position="10"/>
        <end position="39"/>
    </location>
</feature>
<feature type="topological domain" description="Lumenal" evidence="1">
    <location>
        <begin position="40"/>
        <end position="56"/>
    </location>
</feature>
<feature type="transmembrane region" description="Helical" evidence="1">
    <location>
        <begin position="57"/>
        <end position="78"/>
    </location>
</feature>
<feature type="topological domain" description="Cytoplasmic" evidence="1">
    <location>
        <begin position="79"/>
        <end position="89"/>
    </location>
</feature>
<feature type="transmembrane region" description="Helical" evidence="1">
    <location>
        <begin position="90"/>
        <end position="114"/>
    </location>
</feature>
<feature type="topological domain" description="Lumenal" evidence="1">
    <location>
        <begin position="115"/>
        <end position="123"/>
    </location>
</feature>
<feature type="transmembrane region" description="Helical" evidence="1">
    <location>
        <begin position="124"/>
        <end position="149"/>
    </location>
</feature>
<feature type="topological domain" description="Cytoplasmic" evidence="1">
    <location>
        <begin position="150"/>
        <end position="159"/>
    </location>
</feature>
<feature type="transmembrane region" description="Helical" evidence="1">
    <location>
        <begin position="160"/>
        <end position="187"/>
    </location>
</feature>
<feature type="topological domain" description="Lumenal" evidence="1">
    <location>
        <begin position="188"/>
        <end position="191"/>
    </location>
</feature>
<feature type="transmembrane region" description="Helical" evidence="1">
    <location>
        <begin position="192"/>
        <end position="220"/>
    </location>
</feature>
<feature type="topological domain" description="Cytoplasmic" evidence="1">
    <location>
        <begin position="221"/>
        <end position="248"/>
    </location>
</feature>
<feature type="transmembrane region" description="Helical" evidence="1">
    <location>
        <begin position="249"/>
        <end position="275"/>
    </location>
</feature>
<feature type="topological domain" description="Lumenal" evidence="1">
    <location>
        <begin position="276"/>
        <end position="314"/>
    </location>
</feature>
<feature type="transmembrane region" description="Helical" evidence="1">
    <location>
        <begin position="315"/>
        <end position="339"/>
    </location>
</feature>
<feature type="topological domain" description="Cytoplasmic" evidence="1">
    <location>
        <begin position="340"/>
        <end position="887"/>
    </location>
</feature>
<feature type="domain" description="SSD" evidence="4">
    <location>
        <begin position="61"/>
        <end position="218"/>
    </location>
</feature>
<feature type="short sequence motif" description="INSIG-binding motif" evidence="2">
    <location>
        <begin position="75"/>
        <end position="78"/>
    </location>
</feature>
<feature type="active site" description="Charge relay system" evidence="2">
    <location>
        <position position="558"/>
    </location>
</feature>
<feature type="active site" description="Charge relay system" evidence="2">
    <location>
        <position position="690"/>
    </location>
</feature>
<feature type="active site" description="Charge relay system" evidence="2">
    <location>
        <position position="766"/>
    </location>
</feature>
<feature type="active site" description="Proton donor" evidence="5">
    <location>
        <position position="865"/>
    </location>
</feature>
<feature type="modified residue" description="Phosphoserine; by AMPK" evidence="6">
    <location>
        <position position="871"/>
    </location>
</feature>
<feature type="glycosylation site" description="N-linked (GlcNAc...) asparagine" evidence="3">
    <location>
        <position position="281"/>
    </location>
</feature>
<feature type="cross-link" description="Glycyl lysine isopeptide (Lys-Gly) (interchain with G-Cter in ubiquitin)" evidence="1">
    <location>
        <position position="89"/>
    </location>
</feature>
<feature type="cross-link" description="Glycyl lysine isopeptide (Lys-Gly) (interchain with G-Cter in ubiquitin)" evidence="1">
    <location>
        <position position="248"/>
    </location>
</feature>
<feature type="sequence conflict" description="In Ref. 4; AA sequence." evidence="8" ref="4">
    <original>S</original>
    <variation>T</variation>
    <location>
        <position position="423"/>
    </location>
</feature>
<feature type="sequence conflict" description="In Ref. 4; AA sequence." evidence="8" ref="4">
    <original>L</original>
    <variation>V</variation>
    <location>
        <position position="428"/>
    </location>
</feature>
<feature type="sequence conflict" description="In Ref. 4; AA sequence." evidence="8" ref="4">
    <original>P</original>
    <variation>N</variation>
    <location>
        <position position="443"/>
    </location>
</feature>
<feature type="sequence conflict" description="In Ref. 3; CAA39001." evidence="8" ref="3">
    <original>IRLQSKTGDA</original>
    <variation>PIRSPKRGTS</variation>
    <location>
        <begin position="644"/>
        <end position="653"/>
    </location>
</feature>
<feature type="sequence conflict" description="In Ref. 1; AAA40608." evidence="8" ref="1">
    <original>FF</original>
    <variation>GV</variation>
    <location>
        <begin position="673"/>
        <end position="674"/>
    </location>
</feature>
<feature type="sequence conflict" description="In Ref. 3; CAA39001." evidence="8" ref="3">
    <original>T</original>
    <variation>S</variation>
    <location>
        <position position="722"/>
    </location>
</feature>
<feature type="sequence conflict" description="In Ref. 1; AAA40608." evidence="8" ref="1">
    <original>A</original>
    <variation>L</variation>
    <location>
        <position position="750"/>
    </location>
</feature>
<feature type="sequence conflict" description="In Ref. 3; CAA39001." evidence="8" ref="3">
    <original>G</original>
    <variation>A</variation>
    <location>
        <position position="764"/>
    </location>
</feature>
<protein>
    <recommendedName>
        <fullName>3-hydroxy-3-methylglutaryl-coenzyme A reductase</fullName>
        <shortName>HMG-CoA reductase</shortName>
        <ecNumber evidence="7">1.1.1.34</ecNumber>
    </recommendedName>
</protein>
<accession>P51639</accession>
<accession>Q64601</accession>
<accession>Q6P2A6</accession>
<name>HMDH_RAT</name>
<gene>
    <name type="primary">Hmgcr</name>
</gene>
<keyword id="KW-0152">Cholesterol biosynthesis</keyword>
<keyword id="KW-0153">Cholesterol metabolism</keyword>
<keyword id="KW-0903">Direct protein sequencing</keyword>
<keyword id="KW-0256">Endoplasmic reticulum</keyword>
<keyword id="KW-0325">Glycoprotein</keyword>
<keyword id="KW-1017">Isopeptide bond</keyword>
<keyword id="KW-0444">Lipid biosynthesis</keyword>
<keyword id="KW-0443">Lipid metabolism</keyword>
<keyword id="KW-0472">Membrane</keyword>
<keyword id="KW-0521">NADP</keyword>
<keyword id="KW-0560">Oxidoreductase</keyword>
<keyword id="KW-0576">Peroxisome</keyword>
<keyword id="KW-0597">Phosphoprotein</keyword>
<keyword id="KW-1185">Reference proteome</keyword>
<keyword id="KW-0752">Steroid biosynthesis</keyword>
<keyword id="KW-0753">Steroid metabolism</keyword>
<keyword id="KW-0756">Sterol biosynthesis</keyword>
<keyword id="KW-1207">Sterol metabolism</keyword>
<keyword id="KW-0812">Transmembrane</keyword>
<keyword id="KW-1133">Transmembrane helix</keyword>
<keyword id="KW-0832">Ubl conjugation</keyword>
<comment type="function">
    <text evidence="7">Catalyzes the conversion of (3S)-hydroxy-3-methylglutaryl-CoA (HMG-CoA) to mevalonic acid, the rate-limiting step in the synthesis of cholesterol and other isoprenoids, thus plays a critical role in cellular cholesterol homeostasis.</text>
</comment>
<comment type="catalytic activity">
    <reaction evidence="7">
        <text>(R)-mevalonate + 2 NADP(+) + CoA = (3S)-3-hydroxy-3-methylglutaryl-CoA + 2 NADPH + 2 H(+)</text>
        <dbReference type="Rhea" id="RHEA:15989"/>
        <dbReference type="ChEBI" id="CHEBI:15378"/>
        <dbReference type="ChEBI" id="CHEBI:36464"/>
        <dbReference type="ChEBI" id="CHEBI:43074"/>
        <dbReference type="ChEBI" id="CHEBI:57287"/>
        <dbReference type="ChEBI" id="CHEBI:57783"/>
        <dbReference type="ChEBI" id="CHEBI:58349"/>
        <dbReference type="EC" id="1.1.1.34"/>
    </reaction>
    <physiologicalReaction direction="right-to-left" evidence="9">
        <dbReference type="Rhea" id="RHEA:15991"/>
    </physiologicalReaction>
</comment>
<comment type="activity regulation">
    <text evidence="1 2">Regulated by a negative feedback mechanism through sterols and non-sterol metabolites derived from mevalonate (By similarity). Phosphorylation at Ser-871 down-regulates the catalytic activity (By similarity).</text>
</comment>
<comment type="pathway">
    <text>Metabolic intermediate biosynthesis; (R)-mevalonate biosynthesis; (R)-mevalonate from acetyl-CoA: step 3/3.</text>
</comment>
<comment type="subunit">
    <text evidence="2 7">Homotetramer (By similarity). Homodimer (PubMed:4019513). Interacts (via its SSD) with INSIG1; the interaction, accelerated by sterols, leads to the recruitment of HMGCR to AMFR/gp78 for its ubiquitination by the sterol-mediated ERAD pathway. Interacts with UBIAD1 (By similarity).</text>
</comment>
<comment type="subcellular location">
    <subcellularLocation>
        <location evidence="2">Endoplasmic reticulum membrane</location>
        <topology evidence="1">Multi-pass membrane protein</topology>
    </subcellularLocation>
    <subcellularLocation>
        <location evidence="2">Peroxisome membrane</location>
        <topology evidence="1">Multi-pass membrane protein</topology>
    </subcellularLocation>
</comment>
<comment type="PTM">
    <text evidence="2">Undergoes sterol-mediated ubiquitination and ER-associated degradation (ERAD). Accumulation of sterols in the endoplasmic reticulum (ER) membrane, triggers binding of the reductase to the ER membrane protein INSIG1 or INSIG2. The INSIG1 binding leads to the recruitment of the ubiquitin ligase, AMFR/gp78, RNF139 or RNF145, initiating ubiquitination of the reductase. The ubiquitinated reductase is then extracted from the ER membrane and delivered to cytosolic 26S proteosomes by a mechanism probably mediated by the ATPase Valosin-containing protein VCP/p97. The INSIG2-binding leads to the recruitment of the ubiquitin ligase RNF139, initiating ubiquitination of the reductase. Lys-248 is the main site of ubiquitination. Ubiquitination is enhanced by the presence of a geranylgeranylated protein.</text>
</comment>
<comment type="PTM">
    <text evidence="2">N-glycosylated. Deglycosylated by NGLY1 on release from the endoplasmic reticulum (ER) in a sterol-mediated manner.</text>
</comment>
<comment type="PTM">
    <text evidence="1">Phosphorylated. Phosphorylation at Ser-871 reduces the catalytic activity.</text>
</comment>
<comment type="similarity">
    <text evidence="8">Belongs to the HMG-CoA reductase family.</text>
</comment>
<organism>
    <name type="scientific">Rattus norvegicus</name>
    <name type="common">Rat</name>
    <dbReference type="NCBI Taxonomy" id="10116"/>
    <lineage>
        <taxon>Eukaryota</taxon>
        <taxon>Metazoa</taxon>
        <taxon>Chordata</taxon>
        <taxon>Craniata</taxon>
        <taxon>Vertebrata</taxon>
        <taxon>Euteleostomi</taxon>
        <taxon>Mammalia</taxon>
        <taxon>Eutheria</taxon>
        <taxon>Euarchontoglires</taxon>
        <taxon>Glires</taxon>
        <taxon>Rodentia</taxon>
        <taxon>Myomorpha</taxon>
        <taxon>Muroidea</taxon>
        <taxon>Muridae</taxon>
        <taxon>Murinae</taxon>
        <taxon>Rattus</taxon>
    </lineage>
</organism>